<name>MURC_PELUB</name>
<gene>
    <name evidence="1" type="primary">murC</name>
    <name type="ordered locus">SAR11_0023</name>
</gene>
<dbReference type="EC" id="6.3.2.8" evidence="1"/>
<dbReference type="EMBL" id="CP000084">
    <property type="protein sequence ID" value="AAZ20848.1"/>
    <property type="molecule type" value="Genomic_DNA"/>
</dbReference>
<dbReference type="RefSeq" id="WP_011281418.1">
    <property type="nucleotide sequence ID" value="NC_007205.1"/>
</dbReference>
<dbReference type="SMR" id="Q4FPK6"/>
<dbReference type="STRING" id="335992.SAR11_0023"/>
<dbReference type="GeneID" id="66294526"/>
<dbReference type="KEGG" id="pub:SAR11_0023"/>
<dbReference type="eggNOG" id="COG0773">
    <property type="taxonomic scope" value="Bacteria"/>
</dbReference>
<dbReference type="HOGENOM" id="CLU_028104_2_2_5"/>
<dbReference type="OrthoDB" id="9804126at2"/>
<dbReference type="UniPathway" id="UPA00219"/>
<dbReference type="Proteomes" id="UP000002528">
    <property type="component" value="Chromosome"/>
</dbReference>
<dbReference type="GO" id="GO:0005737">
    <property type="term" value="C:cytoplasm"/>
    <property type="evidence" value="ECO:0007669"/>
    <property type="project" value="UniProtKB-SubCell"/>
</dbReference>
<dbReference type="GO" id="GO:0005524">
    <property type="term" value="F:ATP binding"/>
    <property type="evidence" value="ECO:0007669"/>
    <property type="project" value="UniProtKB-UniRule"/>
</dbReference>
<dbReference type="GO" id="GO:0008763">
    <property type="term" value="F:UDP-N-acetylmuramate-L-alanine ligase activity"/>
    <property type="evidence" value="ECO:0007669"/>
    <property type="project" value="UniProtKB-UniRule"/>
</dbReference>
<dbReference type="GO" id="GO:0051301">
    <property type="term" value="P:cell division"/>
    <property type="evidence" value="ECO:0007669"/>
    <property type="project" value="UniProtKB-KW"/>
</dbReference>
<dbReference type="GO" id="GO:0071555">
    <property type="term" value="P:cell wall organization"/>
    <property type="evidence" value="ECO:0007669"/>
    <property type="project" value="UniProtKB-KW"/>
</dbReference>
<dbReference type="GO" id="GO:0009252">
    <property type="term" value="P:peptidoglycan biosynthetic process"/>
    <property type="evidence" value="ECO:0007669"/>
    <property type="project" value="UniProtKB-UniRule"/>
</dbReference>
<dbReference type="GO" id="GO:0008360">
    <property type="term" value="P:regulation of cell shape"/>
    <property type="evidence" value="ECO:0007669"/>
    <property type="project" value="UniProtKB-KW"/>
</dbReference>
<dbReference type="Gene3D" id="3.90.190.20">
    <property type="entry name" value="Mur ligase, C-terminal domain"/>
    <property type="match status" value="1"/>
</dbReference>
<dbReference type="Gene3D" id="3.40.1190.10">
    <property type="entry name" value="Mur-like, catalytic domain"/>
    <property type="match status" value="1"/>
</dbReference>
<dbReference type="Gene3D" id="3.40.50.720">
    <property type="entry name" value="NAD(P)-binding Rossmann-like Domain"/>
    <property type="match status" value="1"/>
</dbReference>
<dbReference type="HAMAP" id="MF_00046">
    <property type="entry name" value="MurC"/>
    <property type="match status" value="1"/>
</dbReference>
<dbReference type="InterPro" id="IPR036565">
    <property type="entry name" value="Mur-like_cat_sf"/>
</dbReference>
<dbReference type="InterPro" id="IPR004101">
    <property type="entry name" value="Mur_ligase_C"/>
</dbReference>
<dbReference type="InterPro" id="IPR036615">
    <property type="entry name" value="Mur_ligase_C_dom_sf"/>
</dbReference>
<dbReference type="InterPro" id="IPR013221">
    <property type="entry name" value="Mur_ligase_cen"/>
</dbReference>
<dbReference type="InterPro" id="IPR000713">
    <property type="entry name" value="Mur_ligase_N"/>
</dbReference>
<dbReference type="InterPro" id="IPR050061">
    <property type="entry name" value="MurCDEF_pg_biosynth"/>
</dbReference>
<dbReference type="InterPro" id="IPR005758">
    <property type="entry name" value="UDP-N-AcMur_Ala_ligase_MurC"/>
</dbReference>
<dbReference type="NCBIfam" id="TIGR01082">
    <property type="entry name" value="murC"/>
    <property type="match status" value="1"/>
</dbReference>
<dbReference type="PANTHER" id="PTHR43445:SF3">
    <property type="entry name" value="UDP-N-ACETYLMURAMATE--L-ALANINE LIGASE"/>
    <property type="match status" value="1"/>
</dbReference>
<dbReference type="PANTHER" id="PTHR43445">
    <property type="entry name" value="UDP-N-ACETYLMURAMATE--L-ALANINE LIGASE-RELATED"/>
    <property type="match status" value="1"/>
</dbReference>
<dbReference type="Pfam" id="PF01225">
    <property type="entry name" value="Mur_ligase"/>
    <property type="match status" value="1"/>
</dbReference>
<dbReference type="Pfam" id="PF02875">
    <property type="entry name" value="Mur_ligase_C"/>
    <property type="match status" value="1"/>
</dbReference>
<dbReference type="Pfam" id="PF08245">
    <property type="entry name" value="Mur_ligase_M"/>
    <property type="match status" value="1"/>
</dbReference>
<dbReference type="SUPFAM" id="SSF51984">
    <property type="entry name" value="MurCD N-terminal domain"/>
    <property type="match status" value="1"/>
</dbReference>
<dbReference type="SUPFAM" id="SSF53623">
    <property type="entry name" value="MurD-like peptide ligases, catalytic domain"/>
    <property type="match status" value="1"/>
</dbReference>
<dbReference type="SUPFAM" id="SSF53244">
    <property type="entry name" value="MurD-like peptide ligases, peptide-binding domain"/>
    <property type="match status" value="1"/>
</dbReference>
<accession>Q4FPK6</accession>
<sequence length="464" mass="52446">MKIELAKTEIIHFVGIGGIGMSGLALIMKRMGFNVQGSDVLGNKNIERLKKDKIKITISHTKKNIAKATIVVISSAIKNNNPELIEAKLKQLPIYKRGEMLANIVSLTKNIVVTGSHGKTTTTSLLASIFSKTKLDPTIINGGVLNAIKNSAKLGKSDWCILEADESDGSFIHVPPTYSIVTNIDREHMDFYNSMKDLKELFIKFINKVPSFGKSFICIDDKNNKDLLSKLKMKNYYTYGTDNKSNFYIKNIKQEKEYSQYDLAINLPGKKNLTIRKIKLPLLGIHNIRNSTAAIAVAVTIGISQNIIKKGLKEFKGVQRRFNKIFTHRETNFYDDYAHHPTEIREVLNGVRAAYKNEEVICIFQPHRISRLKDLKKEFSLSFKKADVVILCPIYTAGEKIKLGFKYNNFAKDIVKNSKVRLFMVEDQYQLAKFIKNTIFGKKIVVGMGAGTISAWMRQLPELI</sequence>
<evidence type="ECO:0000255" key="1">
    <source>
        <dbReference type="HAMAP-Rule" id="MF_00046"/>
    </source>
</evidence>
<feature type="chain" id="PRO_0000242571" description="UDP-N-acetylmuramate--L-alanine ligase">
    <location>
        <begin position="1"/>
        <end position="464"/>
    </location>
</feature>
<feature type="binding site" evidence="1">
    <location>
        <begin position="115"/>
        <end position="121"/>
    </location>
    <ligand>
        <name>ATP</name>
        <dbReference type="ChEBI" id="CHEBI:30616"/>
    </ligand>
</feature>
<proteinExistence type="inferred from homology"/>
<comment type="function">
    <text evidence="1">Cell wall formation.</text>
</comment>
<comment type="catalytic activity">
    <reaction evidence="1">
        <text>UDP-N-acetyl-alpha-D-muramate + L-alanine + ATP = UDP-N-acetyl-alpha-D-muramoyl-L-alanine + ADP + phosphate + H(+)</text>
        <dbReference type="Rhea" id="RHEA:23372"/>
        <dbReference type="ChEBI" id="CHEBI:15378"/>
        <dbReference type="ChEBI" id="CHEBI:30616"/>
        <dbReference type="ChEBI" id="CHEBI:43474"/>
        <dbReference type="ChEBI" id="CHEBI:57972"/>
        <dbReference type="ChEBI" id="CHEBI:70757"/>
        <dbReference type="ChEBI" id="CHEBI:83898"/>
        <dbReference type="ChEBI" id="CHEBI:456216"/>
        <dbReference type="EC" id="6.3.2.8"/>
    </reaction>
</comment>
<comment type="pathway">
    <text evidence="1">Cell wall biogenesis; peptidoglycan biosynthesis.</text>
</comment>
<comment type="subcellular location">
    <subcellularLocation>
        <location evidence="1">Cytoplasm</location>
    </subcellularLocation>
</comment>
<comment type="similarity">
    <text evidence="1">Belongs to the MurCDEF family.</text>
</comment>
<reference key="1">
    <citation type="journal article" date="2005" name="Science">
        <title>Genome streamlining in a cosmopolitan oceanic bacterium.</title>
        <authorList>
            <person name="Giovannoni S.J."/>
            <person name="Tripp H.J."/>
            <person name="Givan S."/>
            <person name="Podar M."/>
            <person name="Vergin K.L."/>
            <person name="Baptista D."/>
            <person name="Bibbs L."/>
            <person name="Eads J."/>
            <person name="Richardson T.H."/>
            <person name="Noordewier M."/>
            <person name="Rappe M.S."/>
            <person name="Short J.M."/>
            <person name="Carrington J.C."/>
            <person name="Mathur E.J."/>
        </authorList>
    </citation>
    <scope>NUCLEOTIDE SEQUENCE [LARGE SCALE GENOMIC DNA]</scope>
    <source>
        <strain>HTCC1062</strain>
    </source>
</reference>
<protein>
    <recommendedName>
        <fullName evidence="1">UDP-N-acetylmuramate--L-alanine ligase</fullName>
        <ecNumber evidence="1">6.3.2.8</ecNumber>
    </recommendedName>
    <alternativeName>
        <fullName evidence="1">UDP-N-acetylmuramoyl-L-alanine synthetase</fullName>
    </alternativeName>
</protein>
<keyword id="KW-0067">ATP-binding</keyword>
<keyword id="KW-0131">Cell cycle</keyword>
<keyword id="KW-0132">Cell division</keyword>
<keyword id="KW-0133">Cell shape</keyword>
<keyword id="KW-0961">Cell wall biogenesis/degradation</keyword>
<keyword id="KW-0963">Cytoplasm</keyword>
<keyword id="KW-0436">Ligase</keyword>
<keyword id="KW-0547">Nucleotide-binding</keyword>
<keyword id="KW-0573">Peptidoglycan synthesis</keyword>
<keyword id="KW-1185">Reference proteome</keyword>
<organism>
    <name type="scientific">Pelagibacter ubique (strain HTCC1062)</name>
    <dbReference type="NCBI Taxonomy" id="335992"/>
    <lineage>
        <taxon>Bacteria</taxon>
        <taxon>Pseudomonadati</taxon>
        <taxon>Pseudomonadota</taxon>
        <taxon>Alphaproteobacteria</taxon>
        <taxon>Candidatus Pelagibacterales</taxon>
        <taxon>Candidatus Pelagibacteraceae</taxon>
        <taxon>Candidatus Pelagibacter</taxon>
    </lineage>
</organism>